<reference key="1">
    <citation type="journal article" date="2016" name="Front. Microbiol.">
        <title>The complete genome sequence of hyperthermophile Dictyoglomus turgidum DSM 6724 reveals a specialized carbohydrate fermentor.</title>
        <authorList>
            <person name="Brumm P.J."/>
            <person name="Gowda K."/>
            <person name="Robb F.T."/>
            <person name="Mead D.A."/>
        </authorList>
    </citation>
    <scope>NUCLEOTIDE SEQUENCE [LARGE SCALE GENOMIC DNA]</scope>
    <source>
        <strain>DSM 6724 / Z-1310</strain>
    </source>
</reference>
<evidence type="ECO:0000255" key="1">
    <source>
        <dbReference type="HAMAP-Rule" id="MF_00736"/>
    </source>
</evidence>
<evidence type="ECO:0000305" key="2"/>
<protein>
    <recommendedName>
        <fullName evidence="1">Large ribosomal subunit protein uL11</fullName>
    </recommendedName>
    <alternativeName>
        <fullName evidence="2">50S ribosomal protein L11</fullName>
    </alternativeName>
</protein>
<keyword id="KW-0488">Methylation</keyword>
<keyword id="KW-1185">Reference proteome</keyword>
<keyword id="KW-0687">Ribonucleoprotein</keyword>
<keyword id="KW-0689">Ribosomal protein</keyword>
<keyword id="KW-0694">RNA-binding</keyword>
<keyword id="KW-0699">rRNA-binding</keyword>
<sequence>MPKKVVGKVKLQLPAGKATPAPPVGPALGQYGVNIMEFCKAYNAATAGQEGMIIPVEITIYEDRSFTFVTKTPPASDLLKKAAGVEKGSGEPNKVKVGKVKRSKIREIAELKMKDLNANDIEAAMRMIEGTARSMGIEIIEG</sequence>
<name>RL11_DICTD</name>
<feature type="chain" id="PRO_1000195625" description="Large ribosomal subunit protein uL11">
    <location>
        <begin position="1"/>
        <end position="142"/>
    </location>
</feature>
<comment type="function">
    <text evidence="1">Forms part of the ribosomal stalk which helps the ribosome interact with GTP-bound translation factors.</text>
</comment>
<comment type="subunit">
    <text evidence="1">Part of the ribosomal stalk of the 50S ribosomal subunit. Interacts with L10 and the large rRNA to form the base of the stalk. L10 forms an elongated spine to which L12 dimers bind in a sequential fashion forming a multimeric L10(L12)X complex.</text>
</comment>
<comment type="PTM">
    <text evidence="1">One or more lysine residues are methylated.</text>
</comment>
<comment type="similarity">
    <text evidence="1">Belongs to the universal ribosomal protein uL11 family.</text>
</comment>
<organism>
    <name type="scientific">Dictyoglomus turgidum (strain DSM 6724 / Z-1310)</name>
    <dbReference type="NCBI Taxonomy" id="515635"/>
    <lineage>
        <taxon>Bacteria</taxon>
        <taxon>Pseudomonadati</taxon>
        <taxon>Dictyoglomota</taxon>
        <taxon>Dictyoglomia</taxon>
        <taxon>Dictyoglomales</taxon>
        <taxon>Dictyoglomaceae</taxon>
        <taxon>Dictyoglomus</taxon>
    </lineage>
</organism>
<accession>B8E0K3</accession>
<gene>
    <name evidence="1" type="primary">rplK</name>
    <name type="ordered locus">Dtur_1374</name>
</gene>
<proteinExistence type="inferred from homology"/>
<dbReference type="EMBL" id="CP001251">
    <property type="protein sequence ID" value="ACK42648.1"/>
    <property type="molecule type" value="Genomic_DNA"/>
</dbReference>
<dbReference type="RefSeq" id="WP_012548197.1">
    <property type="nucleotide sequence ID" value="NC_011661.1"/>
</dbReference>
<dbReference type="RefSeq" id="YP_002353262.1">
    <property type="nucleotide sequence ID" value="NC_011661.1"/>
</dbReference>
<dbReference type="SMR" id="B8E0K3"/>
<dbReference type="FunCoup" id="B8E0K3">
    <property type="interactions" value="414"/>
</dbReference>
<dbReference type="STRING" id="515635.Dtur_1374"/>
<dbReference type="EnsemblBacteria" id="ACK42648">
    <property type="protein sequence ID" value="ACK42648"/>
    <property type="gene ID" value="Dtur_1374"/>
</dbReference>
<dbReference type="KEGG" id="dtu:Dtur_1374"/>
<dbReference type="PATRIC" id="fig|515635.4.peg.1419"/>
<dbReference type="eggNOG" id="COG0080">
    <property type="taxonomic scope" value="Bacteria"/>
</dbReference>
<dbReference type="HOGENOM" id="CLU_074237_2_0_0"/>
<dbReference type="InParanoid" id="B8E0K3"/>
<dbReference type="OrthoDB" id="9802408at2"/>
<dbReference type="Proteomes" id="UP000007719">
    <property type="component" value="Chromosome"/>
</dbReference>
<dbReference type="GO" id="GO:0022625">
    <property type="term" value="C:cytosolic large ribosomal subunit"/>
    <property type="evidence" value="ECO:0000318"/>
    <property type="project" value="GO_Central"/>
</dbReference>
<dbReference type="GO" id="GO:0070180">
    <property type="term" value="F:large ribosomal subunit rRNA binding"/>
    <property type="evidence" value="ECO:0000318"/>
    <property type="project" value="GO_Central"/>
</dbReference>
<dbReference type="GO" id="GO:0003735">
    <property type="term" value="F:structural constituent of ribosome"/>
    <property type="evidence" value="ECO:0000318"/>
    <property type="project" value="GO_Central"/>
</dbReference>
<dbReference type="GO" id="GO:0006412">
    <property type="term" value="P:translation"/>
    <property type="evidence" value="ECO:0000318"/>
    <property type="project" value="GO_Central"/>
</dbReference>
<dbReference type="CDD" id="cd00349">
    <property type="entry name" value="Ribosomal_L11"/>
    <property type="match status" value="1"/>
</dbReference>
<dbReference type="FunFam" id="1.10.10.250:FF:000001">
    <property type="entry name" value="50S ribosomal protein L11"/>
    <property type="match status" value="1"/>
</dbReference>
<dbReference type="FunFam" id="3.30.1550.10:FF:000001">
    <property type="entry name" value="50S ribosomal protein L11"/>
    <property type="match status" value="1"/>
</dbReference>
<dbReference type="Gene3D" id="1.10.10.250">
    <property type="entry name" value="Ribosomal protein L11, C-terminal domain"/>
    <property type="match status" value="1"/>
</dbReference>
<dbReference type="Gene3D" id="3.30.1550.10">
    <property type="entry name" value="Ribosomal protein L11/L12, N-terminal domain"/>
    <property type="match status" value="1"/>
</dbReference>
<dbReference type="HAMAP" id="MF_00736">
    <property type="entry name" value="Ribosomal_uL11"/>
    <property type="match status" value="1"/>
</dbReference>
<dbReference type="InterPro" id="IPR000911">
    <property type="entry name" value="Ribosomal_uL11"/>
</dbReference>
<dbReference type="InterPro" id="IPR006519">
    <property type="entry name" value="Ribosomal_uL11_bac-typ"/>
</dbReference>
<dbReference type="InterPro" id="IPR020783">
    <property type="entry name" value="Ribosomal_uL11_C"/>
</dbReference>
<dbReference type="InterPro" id="IPR036769">
    <property type="entry name" value="Ribosomal_uL11_C_sf"/>
</dbReference>
<dbReference type="InterPro" id="IPR020785">
    <property type="entry name" value="Ribosomal_uL11_CS"/>
</dbReference>
<dbReference type="InterPro" id="IPR020784">
    <property type="entry name" value="Ribosomal_uL11_N"/>
</dbReference>
<dbReference type="InterPro" id="IPR036796">
    <property type="entry name" value="Ribosomal_uL11_N_sf"/>
</dbReference>
<dbReference type="NCBIfam" id="TIGR01632">
    <property type="entry name" value="L11_bact"/>
    <property type="match status" value="1"/>
</dbReference>
<dbReference type="PANTHER" id="PTHR11661">
    <property type="entry name" value="60S RIBOSOMAL PROTEIN L12"/>
    <property type="match status" value="1"/>
</dbReference>
<dbReference type="PANTHER" id="PTHR11661:SF1">
    <property type="entry name" value="LARGE RIBOSOMAL SUBUNIT PROTEIN UL11M"/>
    <property type="match status" value="1"/>
</dbReference>
<dbReference type="Pfam" id="PF00298">
    <property type="entry name" value="Ribosomal_L11"/>
    <property type="match status" value="1"/>
</dbReference>
<dbReference type="Pfam" id="PF03946">
    <property type="entry name" value="Ribosomal_L11_N"/>
    <property type="match status" value="1"/>
</dbReference>
<dbReference type="SMART" id="SM00649">
    <property type="entry name" value="RL11"/>
    <property type="match status" value="1"/>
</dbReference>
<dbReference type="SUPFAM" id="SSF54747">
    <property type="entry name" value="Ribosomal L11/L12e N-terminal domain"/>
    <property type="match status" value="1"/>
</dbReference>
<dbReference type="SUPFAM" id="SSF46906">
    <property type="entry name" value="Ribosomal protein L11, C-terminal domain"/>
    <property type="match status" value="1"/>
</dbReference>
<dbReference type="PROSITE" id="PS00359">
    <property type="entry name" value="RIBOSOMAL_L11"/>
    <property type="match status" value="1"/>
</dbReference>